<reference key="1">
    <citation type="submission" date="2001-09" db="EMBL/GenBank/DDBJ databases">
        <title>Rab7 homologs in Arabidopsis thaliana.</title>
        <authorList>
            <person name="Ueda T."/>
            <person name="Wada Y."/>
            <person name="Nakano A."/>
        </authorList>
    </citation>
    <scope>NUCLEOTIDE SEQUENCE [MRNA]</scope>
</reference>
<reference key="2">
    <citation type="journal article" date="2000" name="Nature">
        <title>Sequence and analysis of chromosome 1 of the plant Arabidopsis thaliana.</title>
        <authorList>
            <person name="Theologis A."/>
            <person name="Ecker J.R."/>
            <person name="Palm C.J."/>
            <person name="Federspiel N.A."/>
            <person name="Kaul S."/>
            <person name="White O."/>
            <person name="Alonso J."/>
            <person name="Altafi H."/>
            <person name="Araujo R."/>
            <person name="Bowman C.L."/>
            <person name="Brooks S.Y."/>
            <person name="Buehler E."/>
            <person name="Chan A."/>
            <person name="Chao Q."/>
            <person name="Chen H."/>
            <person name="Cheuk R.F."/>
            <person name="Chin C.W."/>
            <person name="Chung M.K."/>
            <person name="Conn L."/>
            <person name="Conway A.B."/>
            <person name="Conway A.R."/>
            <person name="Creasy T.H."/>
            <person name="Dewar K."/>
            <person name="Dunn P."/>
            <person name="Etgu P."/>
            <person name="Feldblyum T.V."/>
            <person name="Feng J.-D."/>
            <person name="Fong B."/>
            <person name="Fujii C.Y."/>
            <person name="Gill J.E."/>
            <person name="Goldsmith A.D."/>
            <person name="Haas B."/>
            <person name="Hansen N.F."/>
            <person name="Hughes B."/>
            <person name="Huizar L."/>
            <person name="Hunter J.L."/>
            <person name="Jenkins J."/>
            <person name="Johnson-Hopson C."/>
            <person name="Khan S."/>
            <person name="Khaykin E."/>
            <person name="Kim C.J."/>
            <person name="Koo H.L."/>
            <person name="Kremenetskaia I."/>
            <person name="Kurtz D.B."/>
            <person name="Kwan A."/>
            <person name="Lam B."/>
            <person name="Langin-Hooper S."/>
            <person name="Lee A."/>
            <person name="Lee J.M."/>
            <person name="Lenz C.A."/>
            <person name="Li J.H."/>
            <person name="Li Y.-P."/>
            <person name="Lin X."/>
            <person name="Liu S.X."/>
            <person name="Liu Z.A."/>
            <person name="Luros J.S."/>
            <person name="Maiti R."/>
            <person name="Marziali A."/>
            <person name="Militscher J."/>
            <person name="Miranda M."/>
            <person name="Nguyen M."/>
            <person name="Nierman W.C."/>
            <person name="Osborne B.I."/>
            <person name="Pai G."/>
            <person name="Peterson J."/>
            <person name="Pham P.K."/>
            <person name="Rizzo M."/>
            <person name="Rooney T."/>
            <person name="Rowley D."/>
            <person name="Sakano H."/>
            <person name="Salzberg S.L."/>
            <person name="Schwartz J.R."/>
            <person name="Shinn P."/>
            <person name="Southwick A.M."/>
            <person name="Sun H."/>
            <person name="Tallon L.J."/>
            <person name="Tambunga G."/>
            <person name="Toriumi M.J."/>
            <person name="Town C.D."/>
            <person name="Utterback T."/>
            <person name="Van Aken S."/>
            <person name="Vaysberg M."/>
            <person name="Vysotskaia V.S."/>
            <person name="Walker M."/>
            <person name="Wu D."/>
            <person name="Yu G."/>
            <person name="Fraser C.M."/>
            <person name="Venter J.C."/>
            <person name="Davis R.W."/>
        </authorList>
    </citation>
    <scope>NUCLEOTIDE SEQUENCE [LARGE SCALE GENOMIC DNA]</scope>
    <source>
        <strain>cv. Columbia</strain>
    </source>
</reference>
<reference key="3">
    <citation type="journal article" date="2017" name="Plant J.">
        <title>Araport11: a complete reannotation of the Arabidopsis thaliana reference genome.</title>
        <authorList>
            <person name="Cheng C.Y."/>
            <person name="Krishnakumar V."/>
            <person name="Chan A.P."/>
            <person name="Thibaud-Nissen F."/>
            <person name="Schobel S."/>
            <person name="Town C.D."/>
        </authorList>
    </citation>
    <scope>GENOME REANNOTATION</scope>
    <source>
        <strain>cv. Columbia</strain>
    </source>
</reference>
<reference key="4">
    <citation type="journal article" date="2003" name="Science">
        <title>Empirical analysis of transcriptional activity in the Arabidopsis genome.</title>
        <authorList>
            <person name="Yamada K."/>
            <person name="Lim J."/>
            <person name="Dale J.M."/>
            <person name="Chen H."/>
            <person name="Shinn P."/>
            <person name="Palm C.J."/>
            <person name="Southwick A.M."/>
            <person name="Wu H.C."/>
            <person name="Kim C.J."/>
            <person name="Nguyen M."/>
            <person name="Pham P.K."/>
            <person name="Cheuk R.F."/>
            <person name="Karlin-Newmann G."/>
            <person name="Liu S.X."/>
            <person name="Lam B."/>
            <person name="Sakano H."/>
            <person name="Wu T."/>
            <person name="Yu G."/>
            <person name="Miranda M."/>
            <person name="Quach H.L."/>
            <person name="Tripp M."/>
            <person name="Chang C.H."/>
            <person name="Lee J.M."/>
            <person name="Toriumi M.J."/>
            <person name="Chan M.M."/>
            <person name="Tang C.C."/>
            <person name="Onodera C.S."/>
            <person name="Deng J.M."/>
            <person name="Akiyama K."/>
            <person name="Ansari Y."/>
            <person name="Arakawa T."/>
            <person name="Banh J."/>
            <person name="Banno F."/>
            <person name="Bowser L."/>
            <person name="Brooks S.Y."/>
            <person name="Carninci P."/>
            <person name="Chao Q."/>
            <person name="Choy N."/>
            <person name="Enju A."/>
            <person name="Goldsmith A.D."/>
            <person name="Gurjal M."/>
            <person name="Hansen N.F."/>
            <person name="Hayashizaki Y."/>
            <person name="Johnson-Hopson C."/>
            <person name="Hsuan V.W."/>
            <person name="Iida K."/>
            <person name="Karnes M."/>
            <person name="Khan S."/>
            <person name="Koesema E."/>
            <person name="Ishida J."/>
            <person name="Jiang P.X."/>
            <person name="Jones T."/>
            <person name="Kawai J."/>
            <person name="Kamiya A."/>
            <person name="Meyers C."/>
            <person name="Nakajima M."/>
            <person name="Narusaka M."/>
            <person name="Seki M."/>
            <person name="Sakurai T."/>
            <person name="Satou M."/>
            <person name="Tamse R."/>
            <person name="Vaysberg M."/>
            <person name="Wallender E.K."/>
            <person name="Wong C."/>
            <person name="Yamamura Y."/>
            <person name="Yuan S."/>
            <person name="Shinozaki K."/>
            <person name="Davis R.W."/>
            <person name="Theologis A."/>
            <person name="Ecker J.R."/>
        </authorList>
    </citation>
    <scope>NUCLEOTIDE SEQUENCE [LARGE SCALE MRNA]</scope>
    <source>
        <strain>cv. Columbia</strain>
    </source>
</reference>
<reference key="5">
    <citation type="submission" date="2006-07" db="EMBL/GenBank/DDBJ databases">
        <title>Large-scale analysis of RIKEN Arabidopsis full-length (RAFL) cDNAs.</title>
        <authorList>
            <person name="Totoki Y."/>
            <person name="Seki M."/>
            <person name="Ishida J."/>
            <person name="Nakajima M."/>
            <person name="Enju A."/>
            <person name="Kamiya A."/>
            <person name="Narusaka M."/>
            <person name="Shin-i T."/>
            <person name="Nakagawa M."/>
            <person name="Sakamoto N."/>
            <person name="Oishi K."/>
            <person name="Kohara Y."/>
            <person name="Kobayashi M."/>
            <person name="Toyoda A."/>
            <person name="Sakaki Y."/>
            <person name="Sakurai T."/>
            <person name="Iida K."/>
            <person name="Akiyama K."/>
            <person name="Satou M."/>
            <person name="Toyoda T."/>
            <person name="Konagaya A."/>
            <person name="Carninci P."/>
            <person name="Kawai J."/>
            <person name="Hayashizaki Y."/>
            <person name="Shinozaki K."/>
        </authorList>
    </citation>
    <scope>NUCLEOTIDE SEQUENCE [LARGE SCALE MRNA]</scope>
    <source>
        <strain>cv. Columbia</strain>
    </source>
</reference>
<reference key="6">
    <citation type="journal article" date="2003" name="Plant Physiol.">
        <title>Analysis of the small GTPase gene superfamily of Arabidopsis.</title>
        <authorList>
            <person name="Vernoud V."/>
            <person name="Horton A.C."/>
            <person name="Yang Z."/>
            <person name="Nielsen E."/>
        </authorList>
    </citation>
    <scope>GENE FAMILY</scope>
    <scope>NOMENCLATURE</scope>
</reference>
<reference key="7">
    <citation type="journal article" date="2004" name="Plant Physiol.">
        <title>Induction of salt and osmotic stress tolerance by overexpression of an intracellular vesicle trafficking protein AtRab7 (AtRabG3e).</title>
        <authorList>
            <person name="Mazel A."/>
            <person name="Leshem Y."/>
            <person name="Tiwari B.S."/>
            <person name="Levine A."/>
        </authorList>
    </citation>
    <scope>FUNCTION</scope>
    <scope>INDUCTION</scope>
</reference>
<proteinExistence type="evidence at transcript level"/>
<name>RAG3E_ARATH</name>
<gene>
    <name type="primary">RABG3E</name>
    <name type="synonym">RAB74</name>
    <name type="ordered locus">At1g49300</name>
    <name type="ORF">F13F21.26</name>
</gene>
<protein>
    <recommendedName>
        <fullName>Ras-related protein RABG3e</fullName>
        <shortName>AtRABG3e</shortName>
    </recommendedName>
    <alternativeName>
        <fullName>Ras-related protein Rab74</fullName>
        <shortName>AtRab74</shortName>
    </alternativeName>
</protein>
<feature type="chain" id="PRO_0000407365" description="Ras-related protein RABG3e">
    <location>
        <begin position="1"/>
        <end position="206"/>
    </location>
</feature>
<feature type="short sequence motif" description="Effector region" evidence="1">
    <location>
        <begin position="37"/>
        <end position="45"/>
    </location>
</feature>
<feature type="binding site" evidence="1">
    <location>
        <begin position="15"/>
        <end position="22"/>
    </location>
    <ligand>
        <name>GTP</name>
        <dbReference type="ChEBI" id="CHEBI:37565"/>
    </ligand>
</feature>
<feature type="binding site" evidence="1">
    <location>
        <begin position="63"/>
        <end position="67"/>
    </location>
    <ligand>
        <name>GTP</name>
        <dbReference type="ChEBI" id="CHEBI:37565"/>
    </ligand>
</feature>
<feature type="binding site" evidence="1">
    <location>
        <begin position="125"/>
        <end position="128"/>
    </location>
    <ligand>
        <name>GTP</name>
        <dbReference type="ChEBI" id="CHEBI:37565"/>
    </ligand>
</feature>
<feature type="binding site" evidence="1">
    <location>
        <begin position="158"/>
        <end position="159"/>
    </location>
    <ligand>
        <name>GTP</name>
        <dbReference type="ChEBI" id="CHEBI:37565"/>
    </ligand>
</feature>
<feature type="modified residue" description="Cysteine methyl ester" evidence="1">
    <location>
        <position position="206"/>
    </location>
</feature>
<feature type="lipid moiety-binding region" description="S-geranylgeranyl cysteine" evidence="1">
    <location>
        <position position="204"/>
    </location>
</feature>
<feature type="lipid moiety-binding region" description="S-geranylgeranyl cysteine" evidence="1">
    <location>
        <position position="206"/>
    </location>
</feature>
<accession>Q9XI98</accession>
<keyword id="KW-1003">Cell membrane</keyword>
<keyword id="KW-0342">GTP-binding</keyword>
<keyword id="KW-0449">Lipoprotein</keyword>
<keyword id="KW-0472">Membrane</keyword>
<keyword id="KW-0488">Methylation</keyword>
<keyword id="KW-0547">Nucleotide-binding</keyword>
<keyword id="KW-0636">Prenylation</keyword>
<keyword id="KW-0653">Protein transport</keyword>
<keyword id="KW-1185">Reference proteome</keyword>
<keyword id="KW-0813">Transport</keyword>
<organism>
    <name type="scientific">Arabidopsis thaliana</name>
    <name type="common">Mouse-ear cress</name>
    <dbReference type="NCBI Taxonomy" id="3702"/>
    <lineage>
        <taxon>Eukaryota</taxon>
        <taxon>Viridiplantae</taxon>
        <taxon>Streptophyta</taxon>
        <taxon>Embryophyta</taxon>
        <taxon>Tracheophyta</taxon>
        <taxon>Spermatophyta</taxon>
        <taxon>Magnoliopsida</taxon>
        <taxon>eudicotyledons</taxon>
        <taxon>Gunneridae</taxon>
        <taxon>Pentapetalae</taxon>
        <taxon>rosids</taxon>
        <taxon>malvids</taxon>
        <taxon>Brassicales</taxon>
        <taxon>Brassicaceae</taxon>
        <taxon>Camelineae</taxon>
        <taxon>Arabidopsis</taxon>
    </lineage>
</organism>
<evidence type="ECO:0000250" key="1"/>
<evidence type="ECO:0000269" key="2">
    <source>
    </source>
</evidence>
<evidence type="ECO:0000305" key="3"/>
<evidence type="ECO:0000305" key="4">
    <source>
    </source>
</evidence>
<dbReference type="EMBL" id="AB071849">
    <property type="protein sequence ID" value="BAB68374.1"/>
    <property type="molecule type" value="mRNA"/>
</dbReference>
<dbReference type="EMBL" id="AC007504">
    <property type="protein sequence ID" value="AAD43167.1"/>
    <property type="molecule type" value="Genomic_DNA"/>
</dbReference>
<dbReference type="EMBL" id="CP002684">
    <property type="protein sequence ID" value="AEE32414.1"/>
    <property type="molecule type" value="Genomic_DNA"/>
</dbReference>
<dbReference type="EMBL" id="CP002684">
    <property type="protein sequence ID" value="AEE32415.1"/>
    <property type="molecule type" value="Genomic_DNA"/>
</dbReference>
<dbReference type="EMBL" id="BT004594">
    <property type="protein sequence ID" value="AAO42840.1"/>
    <property type="molecule type" value="mRNA"/>
</dbReference>
<dbReference type="EMBL" id="AK227548">
    <property type="protein sequence ID" value="BAE99544.1"/>
    <property type="molecule type" value="mRNA"/>
</dbReference>
<dbReference type="PIR" id="C96529">
    <property type="entry name" value="C96529"/>
</dbReference>
<dbReference type="RefSeq" id="NP_001031161.1">
    <property type="nucleotide sequence ID" value="NM_001036084.2"/>
</dbReference>
<dbReference type="RefSeq" id="NP_175355.1">
    <property type="nucleotide sequence ID" value="NM_103820.4"/>
</dbReference>
<dbReference type="SMR" id="Q9XI98"/>
<dbReference type="BioGRID" id="26578">
    <property type="interactions" value="1"/>
</dbReference>
<dbReference type="FunCoup" id="Q9XI98">
    <property type="interactions" value="4206"/>
</dbReference>
<dbReference type="IntAct" id="Q9XI98">
    <property type="interactions" value="1"/>
</dbReference>
<dbReference type="STRING" id="3702.Q9XI98"/>
<dbReference type="PaxDb" id="3702-AT1G49300.2"/>
<dbReference type="ProteomicsDB" id="235073"/>
<dbReference type="EnsemblPlants" id="AT1G49300.1">
    <property type="protein sequence ID" value="AT1G49300.1"/>
    <property type="gene ID" value="AT1G49300"/>
</dbReference>
<dbReference type="EnsemblPlants" id="AT1G49300.2">
    <property type="protein sequence ID" value="AT1G49300.2"/>
    <property type="gene ID" value="AT1G49300"/>
</dbReference>
<dbReference type="GeneID" id="841353"/>
<dbReference type="Gramene" id="AT1G49300.1">
    <property type="protein sequence ID" value="AT1G49300.1"/>
    <property type="gene ID" value="AT1G49300"/>
</dbReference>
<dbReference type="Gramene" id="AT1G49300.2">
    <property type="protein sequence ID" value="AT1G49300.2"/>
    <property type="gene ID" value="AT1G49300"/>
</dbReference>
<dbReference type="KEGG" id="ath:AT1G49300"/>
<dbReference type="Araport" id="AT1G49300"/>
<dbReference type="TAIR" id="AT1G49300">
    <property type="gene designation" value="RABG3E"/>
</dbReference>
<dbReference type="eggNOG" id="KOG0394">
    <property type="taxonomic scope" value="Eukaryota"/>
</dbReference>
<dbReference type="HOGENOM" id="CLU_041217_10_6_1"/>
<dbReference type="InParanoid" id="Q9XI98"/>
<dbReference type="OMA" id="ITTNAMK"/>
<dbReference type="OrthoDB" id="1436450at2759"/>
<dbReference type="PhylomeDB" id="Q9XI98"/>
<dbReference type="CD-CODE" id="4299E36E">
    <property type="entry name" value="Nucleolus"/>
</dbReference>
<dbReference type="PRO" id="PR:Q9XI98"/>
<dbReference type="Proteomes" id="UP000006548">
    <property type="component" value="Chromosome 1"/>
</dbReference>
<dbReference type="ExpressionAtlas" id="Q9XI98">
    <property type="expression patterns" value="baseline and differential"/>
</dbReference>
<dbReference type="GO" id="GO:0005794">
    <property type="term" value="C:Golgi apparatus"/>
    <property type="evidence" value="ECO:0007005"/>
    <property type="project" value="TAIR"/>
</dbReference>
<dbReference type="GO" id="GO:0005634">
    <property type="term" value="C:nucleus"/>
    <property type="evidence" value="ECO:0007005"/>
    <property type="project" value="TAIR"/>
</dbReference>
<dbReference type="GO" id="GO:0000325">
    <property type="term" value="C:plant-type vacuole"/>
    <property type="evidence" value="ECO:0007005"/>
    <property type="project" value="TAIR"/>
</dbReference>
<dbReference type="GO" id="GO:0005886">
    <property type="term" value="C:plasma membrane"/>
    <property type="evidence" value="ECO:0007005"/>
    <property type="project" value="TAIR"/>
</dbReference>
<dbReference type="GO" id="GO:0005525">
    <property type="term" value="F:GTP binding"/>
    <property type="evidence" value="ECO:0007669"/>
    <property type="project" value="UniProtKB-KW"/>
</dbReference>
<dbReference type="GO" id="GO:0003924">
    <property type="term" value="F:GTPase activity"/>
    <property type="evidence" value="ECO:0007669"/>
    <property type="project" value="InterPro"/>
</dbReference>
<dbReference type="GO" id="GO:0015031">
    <property type="term" value="P:protein transport"/>
    <property type="evidence" value="ECO:0007669"/>
    <property type="project" value="UniProtKB-KW"/>
</dbReference>
<dbReference type="GO" id="GO:0006979">
    <property type="term" value="P:response to oxidative stress"/>
    <property type="evidence" value="ECO:0000315"/>
    <property type="project" value="TAIR"/>
</dbReference>
<dbReference type="GO" id="GO:0009651">
    <property type="term" value="P:response to salt stress"/>
    <property type="evidence" value="ECO:0000315"/>
    <property type="project" value="TAIR"/>
</dbReference>
<dbReference type="CDD" id="cd01862">
    <property type="entry name" value="Rab7"/>
    <property type="match status" value="1"/>
</dbReference>
<dbReference type="FunFam" id="3.40.50.300:FF:000295">
    <property type="entry name" value="Ras-related protein Rab7"/>
    <property type="match status" value="1"/>
</dbReference>
<dbReference type="Gene3D" id="3.40.50.300">
    <property type="entry name" value="P-loop containing nucleotide triphosphate hydrolases"/>
    <property type="match status" value="1"/>
</dbReference>
<dbReference type="InterPro" id="IPR027417">
    <property type="entry name" value="P-loop_NTPase"/>
</dbReference>
<dbReference type="InterPro" id="IPR005225">
    <property type="entry name" value="Small_GTP-bd"/>
</dbReference>
<dbReference type="InterPro" id="IPR001806">
    <property type="entry name" value="Small_GTPase"/>
</dbReference>
<dbReference type="NCBIfam" id="TIGR00231">
    <property type="entry name" value="small_GTP"/>
    <property type="match status" value="1"/>
</dbReference>
<dbReference type="PANTHER" id="PTHR47981">
    <property type="entry name" value="RAB FAMILY"/>
    <property type="match status" value="1"/>
</dbReference>
<dbReference type="PANTHER" id="PTHR47981:SF26">
    <property type="entry name" value="RAS-RELATED PROTEIN RABG3E"/>
    <property type="match status" value="1"/>
</dbReference>
<dbReference type="Pfam" id="PF00071">
    <property type="entry name" value="Ras"/>
    <property type="match status" value="1"/>
</dbReference>
<dbReference type="PRINTS" id="PR00449">
    <property type="entry name" value="RASTRNSFRMNG"/>
</dbReference>
<dbReference type="SMART" id="SM00175">
    <property type="entry name" value="RAB"/>
    <property type="match status" value="1"/>
</dbReference>
<dbReference type="SMART" id="SM00176">
    <property type="entry name" value="RAN"/>
    <property type="match status" value="1"/>
</dbReference>
<dbReference type="SMART" id="SM00173">
    <property type="entry name" value="RAS"/>
    <property type="match status" value="1"/>
</dbReference>
<dbReference type="SMART" id="SM00174">
    <property type="entry name" value="RHO"/>
    <property type="match status" value="1"/>
</dbReference>
<dbReference type="SUPFAM" id="SSF52540">
    <property type="entry name" value="P-loop containing nucleoside triphosphate hydrolases"/>
    <property type="match status" value="1"/>
</dbReference>
<dbReference type="PROSITE" id="PS51419">
    <property type="entry name" value="RAB"/>
    <property type="match status" value="1"/>
</dbReference>
<comment type="function">
    <text evidence="2">Intracellular vesicle trafficking and protein transport. May play a role in adaptation to stress by recylcing macromolecules in specific cellular compartments.</text>
</comment>
<comment type="subcellular location">
    <subcellularLocation>
        <location evidence="3">Cell membrane</location>
        <topology evidence="3">Lipid-anchor</topology>
        <orientation evidence="3">Cytoplasmic side</orientation>
    </subcellularLocation>
</comment>
<comment type="induction">
    <text evidence="2">By hydrogen peroxide and infection with an incompatible race of P.syringae and B.cinerea.</text>
</comment>
<comment type="miscellaneous">
    <text evidence="4">Plants overexpressing RABG3E exhibit accelerated endocytosis, increased tolerance to salt and osmotic stresses and reduced accumulation of reactive oxygen species during salt stress.</text>
</comment>
<comment type="similarity">
    <text evidence="3">Belongs to the small GTPase superfamily. Rab family.</text>
</comment>
<sequence>MPSRRRTLLKVIILGDSGVGKTSLMNQYVNKKFSNQYKATIGADFLTKEVQFEDRLFTLQIWDTAGQERFQSLGVAFYRGADCCVLVYDVNSAKSFEDLNNWREEFLIQASPSDPENFPFVVIGNKIDVDGGSSRVVSEKKARAWCASKGNIPYYETSAKVGTNVEDAFLCITTNAMKSGEEEEMYLPDTIDVGTSNPQRSTGCEC</sequence>